<comment type="function">
    <text evidence="1">Catalyzes the reductive methylation of 2'-deoxyuridine-5'-monophosphate (dUMP) to 2'-deoxythymidine-5'-monophosphate (dTMP) while utilizing 5,10-methylenetetrahydrofolate (mTHF) as the methyl donor and reductant in the reaction, yielding dihydrofolate (DHF) as a by-product. This enzymatic reaction provides an intracellular de novo source of dTMP, an essential precursor for DNA biosynthesis.</text>
</comment>
<comment type="catalytic activity">
    <reaction evidence="1">
        <text>dUMP + (6R)-5,10-methylene-5,6,7,8-tetrahydrofolate = 7,8-dihydrofolate + dTMP</text>
        <dbReference type="Rhea" id="RHEA:12104"/>
        <dbReference type="ChEBI" id="CHEBI:15636"/>
        <dbReference type="ChEBI" id="CHEBI:57451"/>
        <dbReference type="ChEBI" id="CHEBI:63528"/>
        <dbReference type="ChEBI" id="CHEBI:246422"/>
        <dbReference type="EC" id="2.1.1.45"/>
    </reaction>
</comment>
<comment type="pathway">
    <text evidence="1">Pyrimidine metabolism; dTTP biosynthesis.</text>
</comment>
<comment type="subunit">
    <text evidence="1">Homodimer.</text>
</comment>
<comment type="subcellular location">
    <subcellularLocation>
        <location evidence="1">Cytoplasm</location>
    </subcellularLocation>
</comment>
<comment type="similarity">
    <text evidence="1">Belongs to the thymidylate synthase family. Bacterial-type ThyA subfamily.</text>
</comment>
<sequence>MVRHPEYQYLDLMAHLLENGDRRIDRTGVGTLSGLGAMMRFDLSKGQLPVFTTKRVYWKLAVKEMLWFLTGDTNIRNLLKQNVRIWTDWPLAAYRKATGEAISQEDFEARILADEAFAETWGDLGPVYGKQWRQWRDADGQVHDQIATVIDQLRHNPSSRRMIFHAWNVGELAGMALPPCHMVYQFHVSNLPSPGETKRPRLSLMVYQRSCDLFLGNPFNICQQAVLLAMVAQQVDMDVGELVWAGGDVHIYLNHLDAIREQLSREPRPFPTLRLLRRPDSIDDYRIEDFEVSDYEPHAAIAAEVAV</sequence>
<name>TYSY_RHIR8</name>
<evidence type="ECO:0000255" key="1">
    <source>
        <dbReference type="HAMAP-Rule" id="MF_00008"/>
    </source>
</evidence>
<keyword id="KW-0963">Cytoplasm</keyword>
<keyword id="KW-0489">Methyltransferase</keyword>
<keyword id="KW-0545">Nucleotide biosynthesis</keyword>
<keyword id="KW-0808">Transferase</keyword>
<reference key="1">
    <citation type="journal article" date="2009" name="J. Bacteriol.">
        <title>Genome sequences of three Agrobacterium biovars help elucidate the evolution of multichromosome genomes in bacteria.</title>
        <authorList>
            <person name="Slater S.C."/>
            <person name="Goldman B.S."/>
            <person name="Goodner B."/>
            <person name="Setubal J.C."/>
            <person name="Farrand S.K."/>
            <person name="Nester E.W."/>
            <person name="Burr T.J."/>
            <person name="Banta L."/>
            <person name="Dickerman A.W."/>
            <person name="Paulsen I."/>
            <person name="Otten L."/>
            <person name="Suen G."/>
            <person name="Welch R."/>
            <person name="Almeida N.F."/>
            <person name="Arnold F."/>
            <person name="Burton O.T."/>
            <person name="Du Z."/>
            <person name="Ewing A."/>
            <person name="Godsy E."/>
            <person name="Heisel S."/>
            <person name="Houmiel K.L."/>
            <person name="Jhaveri J."/>
            <person name="Lu J."/>
            <person name="Miller N.M."/>
            <person name="Norton S."/>
            <person name="Chen Q."/>
            <person name="Phoolcharoen W."/>
            <person name="Ohlin V."/>
            <person name="Ondrusek D."/>
            <person name="Pride N."/>
            <person name="Stricklin S.L."/>
            <person name="Sun J."/>
            <person name="Wheeler C."/>
            <person name="Wilson L."/>
            <person name="Zhu H."/>
            <person name="Wood D.W."/>
        </authorList>
    </citation>
    <scope>NUCLEOTIDE SEQUENCE [LARGE SCALE GENOMIC DNA]</scope>
    <source>
        <strain>K84 / ATCC BAA-868</strain>
    </source>
</reference>
<feature type="chain" id="PRO_1000197230" description="Thymidylate synthase">
    <location>
        <begin position="1"/>
        <end position="307"/>
    </location>
</feature>
<feature type="active site" description="Nucleophile" evidence="1">
    <location>
        <position position="180"/>
    </location>
</feature>
<feature type="binding site" description="in other chain" evidence="1">
    <location>
        <position position="26"/>
    </location>
    <ligand>
        <name>dUMP</name>
        <dbReference type="ChEBI" id="CHEBI:246422"/>
        <note>ligand shared between dimeric partners</note>
    </ligand>
</feature>
<feature type="binding site" evidence="1">
    <location>
        <begin position="160"/>
        <end position="161"/>
    </location>
    <ligand>
        <name>dUMP</name>
        <dbReference type="ChEBI" id="CHEBI:246422"/>
        <note>ligand shared between dimeric partners</note>
    </ligand>
</feature>
<feature type="binding site" description="in other chain" evidence="1">
    <location>
        <begin position="209"/>
        <end position="212"/>
    </location>
    <ligand>
        <name>dUMP</name>
        <dbReference type="ChEBI" id="CHEBI:246422"/>
        <note>ligand shared between dimeric partners</note>
    </ligand>
</feature>
<feature type="binding site" evidence="1">
    <location>
        <position position="212"/>
    </location>
    <ligand>
        <name>(6R)-5,10-methylene-5,6,7,8-tetrahydrofolate</name>
        <dbReference type="ChEBI" id="CHEBI:15636"/>
    </ligand>
</feature>
<feature type="binding site" description="in other chain" evidence="1">
    <location>
        <position position="220"/>
    </location>
    <ligand>
        <name>dUMP</name>
        <dbReference type="ChEBI" id="CHEBI:246422"/>
        <note>ligand shared between dimeric partners</note>
    </ligand>
</feature>
<feature type="binding site" description="in other chain" evidence="1">
    <location>
        <begin position="250"/>
        <end position="252"/>
    </location>
    <ligand>
        <name>dUMP</name>
        <dbReference type="ChEBI" id="CHEBI:246422"/>
        <note>ligand shared between dimeric partners</note>
    </ligand>
</feature>
<feature type="binding site" evidence="1">
    <location>
        <position position="306"/>
    </location>
    <ligand>
        <name>(6R)-5,10-methylene-5,6,7,8-tetrahydrofolate</name>
        <dbReference type="ChEBI" id="CHEBI:15636"/>
    </ligand>
</feature>
<dbReference type="EC" id="2.1.1.45" evidence="1"/>
<dbReference type="EMBL" id="CP000628">
    <property type="protein sequence ID" value="ACM27000.1"/>
    <property type="molecule type" value="Genomic_DNA"/>
</dbReference>
<dbReference type="RefSeq" id="WP_012651783.1">
    <property type="nucleotide sequence ID" value="NC_011985.1"/>
</dbReference>
<dbReference type="SMR" id="B9JH03"/>
<dbReference type="STRING" id="311403.Arad_2934"/>
<dbReference type="KEGG" id="ara:Arad_2934"/>
<dbReference type="eggNOG" id="COG0207">
    <property type="taxonomic scope" value="Bacteria"/>
</dbReference>
<dbReference type="HOGENOM" id="CLU_021669_0_0_5"/>
<dbReference type="UniPathway" id="UPA00575"/>
<dbReference type="Proteomes" id="UP000001600">
    <property type="component" value="Chromosome 1"/>
</dbReference>
<dbReference type="GO" id="GO:0005829">
    <property type="term" value="C:cytosol"/>
    <property type="evidence" value="ECO:0007669"/>
    <property type="project" value="TreeGrafter"/>
</dbReference>
<dbReference type="GO" id="GO:0004799">
    <property type="term" value="F:thymidylate synthase activity"/>
    <property type="evidence" value="ECO:0007669"/>
    <property type="project" value="UniProtKB-UniRule"/>
</dbReference>
<dbReference type="GO" id="GO:0006231">
    <property type="term" value="P:dTMP biosynthetic process"/>
    <property type="evidence" value="ECO:0007669"/>
    <property type="project" value="UniProtKB-UniRule"/>
</dbReference>
<dbReference type="GO" id="GO:0006235">
    <property type="term" value="P:dTTP biosynthetic process"/>
    <property type="evidence" value="ECO:0007669"/>
    <property type="project" value="UniProtKB-UniRule"/>
</dbReference>
<dbReference type="GO" id="GO:0032259">
    <property type="term" value="P:methylation"/>
    <property type="evidence" value="ECO:0007669"/>
    <property type="project" value="UniProtKB-KW"/>
</dbReference>
<dbReference type="CDD" id="cd00351">
    <property type="entry name" value="TS_Pyrimidine_HMase"/>
    <property type="match status" value="1"/>
</dbReference>
<dbReference type="Gene3D" id="3.30.572.10">
    <property type="entry name" value="Thymidylate synthase/dCMP hydroxymethylase domain"/>
    <property type="match status" value="1"/>
</dbReference>
<dbReference type="HAMAP" id="MF_00008">
    <property type="entry name" value="Thymidy_synth_bact"/>
    <property type="match status" value="1"/>
</dbReference>
<dbReference type="InterPro" id="IPR045097">
    <property type="entry name" value="Thymidate_synth/dCMP_Mease"/>
</dbReference>
<dbReference type="InterPro" id="IPR023451">
    <property type="entry name" value="Thymidate_synth/dCMP_Mease_dom"/>
</dbReference>
<dbReference type="InterPro" id="IPR036926">
    <property type="entry name" value="Thymidate_synth/dCMP_Mease_sf"/>
</dbReference>
<dbReference type="InterPro" id="IPR000398">
    <property type="entry name" value="Thymidylate_synthase"/>
</dbReference>
<dbReference type="InterPro" id="IPR020940">
    <property type="entry name" value="Thymidylate_synthase_AS"/>
</dbReference>
<dbReference type="NCBIfam" id="NF002497">
    <property type="entry name" value="PRK01827.1-3"/>
    <property type="match status" value="1"/>
</dbReference>
<dbReference type="NCBIfam" id="TIGR03284">
    <property type="entry name" value="thym_sym"/>
    <property type="match status" value="1"/>
</dbReference>
<dbReference type="PANTHER" id="PTHR11548">
    <property type="entry name" value="THYMIDYLATE SYNTHASE 1"/>
    <property type="match status" value="1"/>
</dbReference>
<dbReference type="PANTHER" id="PTHR11548:SF1">
    <property type="entry name" value="THYMIDYLATE SYNTHASE 1"/>
    <property type="match status" value="1"/>
</dbReference>
<dbReference type="Pfam" id="PF00303">
    <property type="entry name" value="Thymidylat_synt"/>
    <property type="match status" value="1"/>
</dbReference>
<dbReference type="PRINTS" id="PR00108">
    <property type="entry name" value="THYMDSNTHASE"/>
</dbReference>
<dbReference type="SUPFAM" id="SSF55831">
    <property type="entry name" value="Thymidylate synthase/dCMP hydroxymethylase"/>
    <property type="match status" value="1"/>
</dbReference>
<dbReference type="PROSITE" id="PS00091">
    <property type="entry name" value="THYMIDYLATE_SYNTHASE"/>
    <property type="match status" value="1"/>
</dbReference>
<accession>B9JH03</accession>
<organism>
    <name type="scientific">Rhizobium rhizogenes (strain K84 / ATCC BAA-868)</name>
    <name type="common">Agrobacterium radiobacter</name>
    <dbReference type="NCBI Taxonomy" id="311403"/>
    <lineage>
        <taxon>Bacteria</taxon>
        <taxon>Pseudomonadati</taxon>
        <taxon>Pseudomonadota</taxon>
        <taxon>Alphaproteobacteria</taxon>
        <taxon>Hyphomicrobiales</taxon>
        <taxon>Rhizobiaceae</taxon>
        <taxon>Rhizobium/Agrobacterium group</taxon>
        <taxon>Rhizobium</taxon>
    </lineage>
</organism>
<protein>
    <recommendedName>
        <fullName evidence="1">Thymidylate synthase</fullName>
        <shortName evidence="1">TS</shortName>
        <shortName evidence="1">TSase</shortName>
        <ecNumber evidence="1">2.1.1.45</ecNumber>
    </recommendedName>
</protein>
<gene>
    <name evidence="1" type="primary">thyA</name>
    <name type="ordered locus">Arad_2934</name>
</gene>
<proteinExistence type="inferred from homology"/>